<dbReference type="EMBL" id="CU928145">
    <property type="protein sequence ID" value="CAV02096.1"/>
    <property type="molecule type" value="Genomic_DNA"/>
</dbReference>
<dbReference type="RefSeq" id="WP_000986215.1">
    <property type="nucleotide sequence ID" value="NZ_CP028304.1"/>
</dbReference>
<dbReference type="SMR" id="B7LDX6"/>
<dbReference type="KEGG" id="eck:EC55989_4992"/>
<dbReference type="HOGENOM" id="CLU_1977621_0_0_6"/>
<dbReference type="Proteomes" id="UP000000746">
    <property type="component" value="Chromosome"/>
</dbReference>
<dbReference type="GO" id="GO:0005737">
    <property type="term" value="C:cytoplasm"/>
    <property type="evidence" value="ECO:0007669"/>
    <property type="project" value="UniProtKB-SubCell"/>
</dbReference>
<dbReference type="GO" id="GO:0043856">
    <property type="term" value="F:anti-sigma factor antagonist activity"/>
    <property type="evidence" value="ECO:0007669"/>
    <property type="project" value="InterPro"/>
</dbReference>
<dbReference type="GO" id="GO:0034599">
    <property type="term" value="P:cellular response to oxidative stress"/>
    <property type="evidence" value="ECO:0007669"/>
    <property type="project" value="UniProtKB-UniRule"/>
</dbReference>
<dbReference type="GO" id="GO:0006974">
    <property type="term" value="P:DNA damage response"/>
    <property type="evidence" value="ECO:0007669"/>
    <property type="project" value="InterPro"/>
</dbReference>
<dbReference type="HAMAP" id="MF_02010">
    <property type="entry name" value="IraD"/>
    <property type="match status" value="1"/>
</dbReference>
<dbReference type="InterPro" id="IPR023776">
    <property type="entry name" value="Anti-adapt_IraD"/>
</dbReference>
<dbReference type="InterPro" id="IPR007048">
    <property type="entry name" value="IraD/Gp25-like"/>
</dbReference>
<dbReference type="NCBIfam" id="NF010726">
    <property type="entry name" value="PRK14128.1-1"/>
    <property type="match status" value="1"/>
</dbReference>
<dbReference type="NCBIfam" id="NF010728">
    <property type="entry name" value="PRK14128.1-3"/>
    <property type="match status" value="1"/>
</dbReference>
<dbReference type="Pfam" id="PF04965">
    <property type="entry name" value="GPW_gp25"/>
    <property type="match status" value="1"/>
</dbReference>
<dbReference type="SUPFAM" id="SSF160719">
    <property type="entry name" value="gpW/gp25-like"/>
    <property type="match status" value="1"/>
</dbReference>
<organism>
    <name type="scientific">Escherichia coli (strain 55989 / EAEC)</name>
    <dbReference type="NCBI Taxonomy" id="585055"/>
    <lineage>
        <taxon>Bacteria</taxon>
        <taxon>Pseudomonadati</taxon>
        <taxon>Pseudomonadota</taxon>
        <taxon>Gammaproteobacteria</taxon>
        <taxon>Enterobacterales</taxon>
        <taxon>Enterobacteriaceae</taxon>
        <taxon>Escherichia</taxon>
    </lineage>
</organism>
<gene>
    <name evidence="1" type="primary">iraD</name>
    <name type="ordered locus">EC55989_4992</name>
</gene>
<comment type="function">
    <text evidence="1">Inhibits RpoS proteolysis by regulating RssB activity, thereby increasing the stability of the sigma stress factor RpoS during oxidative stress. Its effect on RpoS stability is due to its interaction with RssB, which probably blocks the interaction of RssB with RpoS, and the consequent delivery of the RssB-RpoS complex to the ClpXP protein degradation pathway.</text>
</comment>
<comment type="subunit">
    <text evidence="1">Interacts with RssB.</text>
</comment>
<comment type="subcellular location">
    <subcellularLocation>
        <location evidence="1">Cytoplasm</location>
    </subcellularLocation>
</comment>
<comment type="similarity">
    <text evidence="1">Belongs to the GpW/Gp25 family. IraD subfamily.</text>
</comment>
<keyword id="KW-0963">Cytoplasm</keyword>
<keyword id="KW-1185">Reference proteome</keyword>
<keyword id="KW-0346">Stress response</keyword>
<name>IRAD_ECO55</name>
<accession>B7LDX6</accession>
<sequence length="130" mass="14747">MMRQSLQAVLPEISGNKTSPLRKSVCSDLLTLFNSPHSALPSLLVSGMPEWQVHNPSDKHLQSWYCRQLRSALLFHEPRIAALQVNLKEAYCHTLAISLEIMLYHDDESLTFDLVWDNGGWRSATLENVS</sequence>
<evidence type="ECO:0000255" key="1">
    <source>
        <dbReference type="HAMAP-Rule" id="MF_02010"/>
    </source>
</evidence>
<proteinExistence type="inferred from homology"/>
<reference key="1">
    <citation type="journal article" date="2009" name="PLoS Genet.">
        <title>Organised genome dynamics in the Escherichia coli species results in highly diverse adaptive paths.</title>
        <authorList>
            <person name="Touchon M."/>
            <person name="Hoede C."/>
            <person name="Tenaillon O."/>
            <person name="Barbe V."/>
            <person name="Baeriswyl S."/>
            <person name="Bidet P."/>
            <person name="Bingen E."/>
            <person name="Bonacorsi S."/>
            <person name="Bouchier C."/>
            <person name="Bouvet O."/>
            <person name="Calteau A."/>
            <person name="Chiapello H."/>
            <person name="Clermont O."/>
            <person name="Cruveiller S."/>
            <person name="Danchin A."/>
            <person name="Diard M."/>
            <person name="Dossat C."/>
            <person name="Karoui M.E."/>
            <person name="Frapy E."/>
            <person name="Garry L."/>
            <person name="Ghigo J.M."/>
            <person name="Gilles A.M."/>
            <person name="Johnson J."/>
            <person name="Le Bouguenec C."/>
            <person name="Lescat M."/>
            <person name="Mangenot S."/>
            <person name="Martinez-Jehanne V."/>
            <person name="Matic I."/>
            <person name="Nassif X."/>
            <person name="Oztas S."/>
            <person name="Petit M.A."/>
            <person name="Pichon C."/>
            <person name="Rouy Z."/>
            <person name="Ruf C.S."/>
            <person name="Schneider D."/>
            <person name="Tourret J."/>
            <person name="Vacherie B."/>
            <person name="Vallenet D."/>
            <person name="Medigue C."/>
            <person name="Rocha E.P.C."/>
            <person name="Denamur E."/>
        </authorList>
    </citation>
    <scope>NUCLEOTIDE SEQUENCE [LARGE SCALE GENOMIC DNA]</scope>
    <source>
        <strain>55989 / EAEC</strain>
    </source>
</reference>
<feature type="chain" id="PRO_1000189479" description="Anti-adapter protein IraD">
    <location>
        <begin position="1"/>
        <end position="130"/>
    </location>
</feature>
<protein>
    <recommendedName>
        <fullName evidence="1">Anti-adapter protein IraD</fullName>
    </recommendedName>
</protein>